<reference key="1">
    <citation type="submission" date="2007-11" db="EMBL/GenBank/DDBJ databases">
        <title>Complete sequence of chromosome of Shewanella baltica OS195.</title>
        <authorList>
            <consortium name="US DOE Joint Genome Institute"/>
            <person name="Copeland A."/>
            <person name="Lucas S."/>
            <person name="Lapidus A."/>
            <person name="Barry K."/>
            <person name="Glavina del Rio T."/>
            <person name="Dalin E."/>
            <person name="Tice H."/>
            <person name="Pitluck S."/>
            <person name="Chain P."/>
            <person name="Malfatti S."/>
            <person name="Shin M."/>
            <person name="Vergez L."/>
            <person name="Schmutz J."/>
            <person name="Larimer F."/>
            <person name="Land M."/>
            <person name="Hauser L."/>
            <person name="Kyrpides N."/>
            <person name="Kim E."/>
            <person name="Brettar I."/>
            <person name="Rodrigues J."/>
            <person name="Konstantinidis K."/>
            <person name="Klappenbach J."/>
            <person name="Hofle M."/>
            <person name="Tiedje J."/>
            <person name="Richardson P."/>
        </authorList>
    </citation>
    <scope>NUCLEOTIDE SEQUENCE [LARGE SCALE GENOMIC DNA]</scope>
    <source>
        <strain>OS195</strain>
    </source>
</reference>
<protein>
    <recommendedName>
        <fullName evidence="1">Acetate kinase</fullName>
        <ecNumber evidence="1">2.7.2.1</ecNumber>
    </recommendedName>
    <alternativeName>
        <fullName evidence="1">Acetokinase</fullName>
    </alternativeName>
</protein>
<feature type="chain" id="PRO_1000074189" description="Acetate kinase">
    <location>
        <begin position="1"/>
        <end position="399"/>
    </location>
</feature>
<feature type="active site" description="Proton donor/acceptor" evidence="1">
    <location>
        <position position="148"/>
    </location>
</feature>
<feature type="binding site" evidence="1">
    <location>
        <position position="10"/>
    </location>
    <ligand>
        <name>Mg(2+)</name>
        <dbReference type="ChEBI" id="CHEBI:18420"/>
    </ligand>
</feature>
<feature type="binding site" evidence="1">
    <location>
        <position position="17"/>
    </location>
    <ligand>
        <name>ATP</name>
        <dbReference type="ChEBI" id="CHEBI:30616"/>
    </ligand>
</feature>
<feature type="binding site" evidence="1">
    <location>
        <position position="91"/>
    </location>
    <ligand>
        <name>substrate</name>
    </ligand>
</feature>
<feature type="binding site" evidence="1">
    <location>
        <begin position="208"/>
        <end position="212"/>
    </location>
    <ligand>
        <name>ATP</name>
        <dbReference type="ChEBI" id="CHEBI:30616"/>
    </ligand>
</feature>
<feature type="binding site" evidence="1">
    <location>
        <begin position="283"/>
        <end position="285"/>
    </location>
    <ligand>
        <name>ATP</name>
        <dbReference type="ChEBI" id="CHEBI:30616"/>
    </ligand>
</feature>
<feature type="binding site" evidence="1">
    <location>
        <begin position="331"/>
        <end position="335"/>
    </location>
    <ligand>
        <name>ATP</name>
        <dbReference type="ChEBI" id="CHEBI:30616"/>
    </ligand>
</feature>
<feature type="binding site" evidence="1">
    <location>
        <position position="385"/>
    </location>
    <ligand>
        <name>Mg(2+)</name>
        <dbReference type="ChEBI" id="CHEBI:18420"/>
    </ligand>
</feature>
<feature type="site" description="Transition state stabilizer" evidence="1">
    <location>
        <position position="180"/>
    </location>
</feature>
<feature type="site" description="Transition state stabilizer" evidence="1">
    <location>
        <position position="241"/>
    </location>
</feature>
<comment type="function">
    <text evidence="1">Catalyzes the formation of acetyl phosphate from acetate and ATP. Can also catalyze the reverse reaction.</text>
</comment>
<comment type="catalytic activity">
    <reaction evidence="1">
        <text>acetate + ATP = acetyl phosphate + ADP</text>
        <dbReference type="Rhea" id="RHEA:11352"/>
        <dbReference type="ChEBI" id="CHEBI:22191"/>
        <dbReference type="ChEBI" id="CHEBI:30089"/>
        <dbReference type="ChEBI" id="CHEBI:30616"/>
        <dbReference type="ChEBI" id="CHEBI:456216"/>
        <dbReference type="EC" id="2.7.2.1"/>
    </reaction>
</comment>
<comment type="cofactor">
    <cofactor evidence="1">
        <name>Mg(2+)</name>
        <dbReference type="ChEBI" id="CHEBI:18420"/>
    </cofactor>
    <cofactor evidence="1">
        <name>Mn(2+)</name>
        <dbReference type="ChEBI" id="CHEBI:29035"/>
    </cofactor>
    <text evidence="1">Mg(2+). Can also accept Mn(2+).</text>
</comment>
<comment type="pathway">
    <text evidence="1">Metabolic intermediate biosynthesis; acetyl-CoA biosynthesis; acetyl-CoA from acetate: step 1/2.</text>
</comment>
<comment type="subunit">
    <text evidence="1">Homodimer.</text>
</comment>
<comment type="subcellular location">
    <subcellularLocation>
        <location evidence="1">Cytoplasm</location>
    </subcellularLocation>
</comment>
<comment type="similarity">
    <text evidence="1">Belongs to the acetokinase family.</text>
</comment>
<gene>
    <name evidence="1" type="primary">ackA</name>
    <name type="ordered locus">Sbal195_2772</name>
</gene>
<keyword id="KW-0067">ATP-binding</keyword>
<keyword id="KW-0963">Cytoplasm</keyword>
<keyword id="KW-0418">Kinase</keyword>
<keyword id="KW-0460">Magnesium</keyword>
<keyword id="KW-0479">Metal-binding</keyword>
<keyword id="KW-0547">Nucleotide-binding</keyword>
<keyword id="KW-0808">Transferase</keyword>
<evidence type="ECO:0000255" key="1">
    <source>
        <dbReference type="HAMAP-Rule" id="MF_00020"/>
    </source>
</evidence>
<dbReference type="EC" id="2.7.2.1" evidence="1"/>
<dbReference type="EMBL" id="CP000891">
    <property type="protein sequence ID" value="ABX49939.1"/>
    <property type="molecule type" value="Genomic_DNA"/>
</dbReference>
<dbReference type="RefSeq" id="WP_006082161.1">
    <property type="nucleotide sequence ID" value="NC_009997.1"/>
</dbReference>
<dbReference type="SMR" id="A9L605"/>
<dbReference type="GeneID" id="11772866"/>
<dbReference type="KEGG" id="sbn:Sbal195_2772"/>
<dbReference type="HOGENOM" id="CLU_020352_0_1_6"/>
<dbReference type="UniPathway" id="UPA00340">
    <property type="reaction ID" value="UER00458"/>
</dbReference>
<dbReference type="Proteomes" id="UP000000770">
    <property type="component" value="Chromosome"/>
</dbReference>
<dbReference type="GO" id="GO:0005829">
    <property type="term" value="C:cytosol"/>
    <property type="evidence" value="ECO:0007669"/>
    <property type="project" value="TreeGrafter"/>
</dbReference>
<dbReference type="GO" id="GO:0008776">
    <property type="term" value="F:acetate kinase activity"/>
    <property type="evidence" value="ECO:0007669"/>
    <property type="project" value="UniProtKB-UniRule"/>
</dbReference>
<dbReference type="GO" id="GO:0005524">
    <property type="term" value="F:ATP binding"/>
    <property type="evidence" value="ECO:0007669"/>
    <property type="project" value="UniProtKB-KW"/>
</dbReference>
<dbReference type="GO" id="GO:0000287">
    <property type="term" value="F:magnesium ion binding"/>
    <property type="evidence" value="ECO:0007669"/>
    <property type="project" value="UniProtKB-UniRule"/>
</dbReference>
<dbReference type="GO" id="GO:0006083">
    <property type="term" value="P:acetate metabolic process"/>
    <property type="evidence" value="ECO:0007669"/>
    <property type="project" value="TreeGrafter"/>
</dbReference>
<dbReference type="GO" id="GO:0006085">
    <property type="term" value="P:acetyl-CoA biosynthetic process"/>
    <property type="evidence" value="ECO:0007669"/>
    <property type="project" value="UniProtKB-UniRule"/>
</dbReference>
<dbReference type="CDD" id="cd24010">
    <property type="entry name" value="ASKHA_NBD_AcK_PK"/>
    <property type="match status" value="1"/>
</dbReference>
<dbReference type="FunFam" id="3.30.420.40:FF:000041">
    <property type="entry name" value="Acetate kinase"/>
    <property type="match status" value="1"/>
</dbReference>
<dbReference type="Gene3D" id="3.30.420.40">
    <property type="match status" value="2"/>
</dbReference>
<dbReference type="HAMAP" id="MF_00020">
    <property type="entry name" value="Acetate_kinase"/>
    <property type="match status" value="1"/>
</dbReference>
<dbReference type="InterPro" id="IPR004372">
    <property type="entry name" value="Ac/propionate_kinase"/>
</dbReference>
<dbReference type="InterPro" id="IPR000890">
    <property type="entry name" value="Aliphatic_acid_kin_short-chain"/>
</dbReference>
<dbReference type="InterPro" id="IPR023865">
    <property type="entry name" value="Aliphatic_acid_kinase_CS"/>
</dbReference>
<dbReference type="InterPro" id="IPR043129">
    <property type="entry name" value="ATPase_NBD"/>
</dbReference>
<dbReference type="NCBIfam" id="TIGR00016">
    <property type="entry name" value="ackA"/>
    <property type="match status" value="1"/>
</dbReference>
<dbReference type="PANTHER" id="PTHR21060">
    <property type="entry name" value="ACETATE KINASE"/>
    <property type="match status" value="1"/>
</dbReference>
<dbReference type="PANTHER" id="PTHR21060:SF21">
    <property type="entry name" value="ACETATE KINASE"/>
    <property type="match status" value="1"/>
</dbReference>
<dbReference type="Pfam" id="PF00871">
    <property type="entry name" value="Acetate_kinase"/>
    <property type="match status" value="1"/>
</dbReference>
<dbReference type="PIRSF" id="PIRSF000722">
    <property type="entry name" value="Acetate_prop_kin"/>
    <property type="match status" value="1"/>
</dbReference>
<dbReference type="PRINTS" id="PR00471">
    <property type="entry name" value="ACETATEKNASE"/>
</dbReference>
<dbReference type="SUPFAM" id="SSF53067">
    <property type="entry name" value="Actin-like ATPase domain"/>
    <property type="match status" value="2"/>
</dbReference>
<dbReference type="PROSITE" id="PS01075">
    <property type="entry name" value="ACETATE_KINASE_1"/>
    <property type="match status" value="1"/>
</dbReference>
<dbReference type="PROSITE" id="PS01076">
    <property type="entry name" value="ACETATE_KINASE_2"/>
    <property type="match status" value="1"/>
</dbReference>
<name>ACKA_SHEB9</name>
<accession>A9L605</accession>
<sequence length="399" mass="43600">MSNNLVLVLNCGSSSLKFAVIDAQTGDDQISGLAECFGLEDSRIKWKINGEKHEAALGAFTAHREAVEYIVNKILAEQPELAAKIQAVGHRIVHGGEKFTRSVIIDESVIKGIEDCASLAPLHNPAHLIGIRAAIASFPKLPQVAVFDTAFHQSMPDRAYVYALPYKLYREHGIRRYGMHGTSHLFVSREAAKMLNKPIEETNVICAHLGNGASVTAIKGGKSVDTSMGLTPLEGLVMGTRCGDIDPSIIYHLVHQLGYTLEEVNNLMNKQSGLLGISELTNDCRGIEEGYADGHKGATLALEIFCYRLAKYIASYTVPLGRLDAVVFTGGIGENSDLIREKVLNMLEIFNFHVDSERNKAARFGKKGIITQDKGTIAMVIPTNEEWVIAEDSIKLINK</sequence>
<organism>
    <name type="scientific">Shewanella baltica (strain OS195)</name>
    <dbReference type="NCBI Taxonomy" id="399599"/>
    <lineage>
        <taxon>Bacteria</taxon>
        <taxon>Pseudomonadati</taxon>
        <taxon>Pseudomonadota</taxon>
        <taxon>Gammaproteobacteria</taxon>
        <taxon>Alteromonadales</taxon>
        <taxon>Shewanellaceae</taxon>
        <taxon>Shewanella</taxon>
    </lineage>
</organism>
<proteinExistence type="inferred from homology"/>